<reference key="1">
    <citation type="journal article" date="2003" name="Lancet">
        <title>Sequencing and analysis of the genome of the Whipple's disease bacterium Tropheryma whipplei.</title>
        <authorList>
            <person name="Bentley S.D."/>
            <person name="Maiwald M."/>
            <person name="Murphy L.D."/>
            <person name="Pallen M.J."/>
            <person name="Yeats C.A."/>
            <person name="Dover L.G."/>
            <person name="Norbertczak H.T."/>
            <person name="Besra G.S."/>
            <person name="Quail M.A."/>
            <person name="Harris D.E."/>
            <person name="von Herbay A."/>
            <person name="Goble A."/>
            <person name="Rutter S."/>
            <person name="Squares R."/>
            <person name="Squares S."/>
            <person name="Barrell B.G."/>
            <person name="Parkhill J."/>
            <person name="Relman D.A."/>
        </authorList>
    </citation>
    <scope>NUCLEOTIDE SEQUENCE [LARGE SCALE GENOMIC DNA]</scope>
    <source>
        <strain>TW08/27</strain>
    </source>
</reference>
<dbReference type="EC" id="4.1.1.37" evidence="1"/>
<dbReference type="EMBL" id="BX251412">
    <property type="protein sequence ID" value="CAD67408.1"/>
    <property type="molecule type" value="Genomic_DNA"/>
</dbReference>
<dbReference type="RefSeq" id="WP_011096686.1">
    <property type="nucleotide sequence ID" value="NC_004551.1"/>
</dbReference>
<dbReference type="SMR" id="Q83H92"/>
<dbReference type="GeneID" id="67388530"/>
<dbReference type="KEGG" id="tws:TW749"/>
<dbReference type="HOGENOM" id="CLU_040933_0_1_11"/>
<dbReference type="UniPathway" id="UPA00251">
    <property type="reaction ID" value="UER00321"/>
</dbReference>
<dbReference type="GO" id="GO:0005829">
    <property type="term" value="C:cytosol"/>
    <property type="evidence" value="ECO:0007669"/>
    <property type="project" value="TreeGrafter"/>
</dbReference>
<dbReference type="GO" id="GO:0004853">
    <property type="term" value="F:uroporphyrinogen decarboxylase activity"/>
    <property type="evidence" value="ECO:0007669"/>
    <property type="project" value="UniProtKB-UniRule"/>
</dbReference>
<dbReference type="GO" id="GO:0006782">
    <property type="term" value="P:protoporphyrinogen IX biosynthetic process"/>
    <property type="evidence" value="ECO:0007669"/>
    <property type="project" value="UniProtKB-UniRule"/>
</dbReference>
<dbReference type="CDD" id="cd00717">
    <property type="entry name" value="URO-D"/>
    <property type="match status" value="1"/>
</dbReference>
<dbReference type="Gene3D" id="3.20.20.210">
    <property type="match status" value="1"/>
</dbReference>
<dbReference type="HAMAP" id="MF_00218">
    <property type="entry name" value="URO_D"/>
    <property type="match status" value="1"/>
</dbReference>
<dbReference type="InterPro" id="IPR038071">
    <property type="entry name" value="UROD/MetE-like_sf"/>
</dbReference>
<dbReference type="InterPro" id="IPR006361">
    <property type="entry name" value="Uroporphyrinogen_deCO2ase_HemE"/>
</dbReference>
<dbReference type="InterPro" id="IPR000257">
    <property type="entry name" value="Uroporphyrinogen_deCOase"/>
</dbReference>
<dbReference type="NCBIfam" id="TIGR01464">
    <property type="entry name" value="hemE"/>
    <property type="match status" value="1"/>
</dbReference>
<dbReference type="PANTHER" id="PTHR21091">
    <property type="entry name" value="METHYLTETRAHYDROFOLATE:HOMOCYSTEINE METHYLTRANSFERASE RELATED"/>
    <property type="match status" value="1"/>
</dbReference>
<dbReference type="PANTHER" id="PTHR21091:SF169">
    <property type="entry name" value="UROPORPHYRINOGEN DECARBOXYLASE"/>
    <property type="match status" value="1"/>
</dbReference>
<dbReference type="Pfam" id="PF01208">
    <property type="entry name" value="URO-D"/>
    <property type="match status" value="1"/>
</dbReference>
<dbReference type="SUPFAM" id="SSF51726">
    <property type="entry name" value="UROD/MetE-like"/>
    <property type="match status" value="1"/>
</dbReference>
<dbReference type="PROSITE" id="PS00906">
    <property type="entry name" value="UROD_1"/>
    <property type="match status" value="1"/>
</dbReference>
<dbReference type="PROSITE" id="PS00907">
    <property type="entry name" value="UROD_2"/>
    <property type="match status" value="1"/>
</dbReference>
<protein>
    <recommendedName>
        <fullName evidence="1">Uroporphyrinogen decarboxylase</fullName>
        <shortName evidence="1">UPD</shortName>
        <shortName evidence="1">URO-D</shortName>
        <ecNumber evidence="1">4.1.1.37</ecNumber>
    </recommendedName>
</protein>
<sequence length="385" mass="41233">MTGASGVEGTRIPLHSLSCRPSAGRSAGSFVNTGIMEAFRGTRPGCLPVWFMRQAGRSLPEYRAVRGTNTLLEACLNPDLACEITLQPVRRYSVDAAILFSDIVVPLKLAGVGVDILPGTGPVLNNPIDTPDRVNTLLAKTADSIDFGIIAEITRHTVSVLNGIPLIGFAGAPYTLACYMVEGGPSKTHMKARAMMHGDKKTWQKVMMLAARLSGQFLAAQITSGAQAVQIFDSWAGSLSRKDYVDNVAPFSKMTIDLACGIDGNSDLSKTGKSLWPRVPVLHFAANAGHLLTAIRDIGVSVMSVDYTKPLDEASELLDDSMPLQGNIDPAMLFAPWEVLKRHVLDIVQRASRAPSHVLNLGHGVPPDASCDQLARIVDLAHSMV</sequence>
<proteinExistence type="inferred from homology"/>
<evidence type="ECO:0000255" key="1">
    <source>
        <dbReference type="HAMAP-Rule" id="MF_00218"/>
    </source>
</evidence>
<gene>
    <name evidence="1" type="primary">hemE</name>
    <name type="ordered locus">TW749</name>
</gene>
<organism>
    <name type="scientific">Tropheryma whipplei (strain TW08/27)</name>
    <name type="common">Whipple's bacillus</name>
    <dbReference type="NCBI Taxonomy" id="218496"/>
    <lineage>
        <taxon>Bacteria</taxon>
        <taxon>Bacillati</taxon>
        <taxon>Actinomycetota</taxon>
        <taxon>Actinomycetes</taxon>
        <taxon>Micrococcales</taxon>
        <taxon>Tropherymataceae</taxon>
        <taxon>Tropheryma</taxon>
    </lineage>
</organism>
<comment type="function">
    <text evidence="1">Catalyzes the decarboxylation of four acetate groups of uroporphyrinogen-III to yield coproporphyrinogen-III.</text>
</comment>
<comment type="catalytic activity">
    <reaction evidence="1">
        <text>uroporphyrinogen III + 4 H(+) = coproporphyrinogen III + 4 CO2</text>
        <dbReference type="Rhea" id="RHEA:19865"/>
        <dbReference type="ChEBI" id="CHEBI:15378"/>
        <dbReference type="ChEBI" id="CHEBI:16526"/>
        <dbReference type="ChEBI" id="CHEBI:57308"/>
        <dbReference type="ChEBI" id="CHEBI:57309"/>
        <dbReference type="EC" id="4.1.1.37"/>
    </reaction>
</comment>
<comment type="pathway">
    <text evidence="1">Porphyrin-containing compound metabolism; protoporphyrin-IX biosynthesis; coproporphyrinogen-III from 5-aminolevulinate: step 4/4.</text>
</comment>
<comment type="subunit">
    <text evidence="1">Homodimer.</text>
</comment>
<comment type="subcellular location">
    <subcellularLocation>
        <location evidence="1">Cytoplasm</location>
    </subcellularLocation>
</comment>
<comment type="similarity">
    <text evidence="1">Belongs to the uroporphyrinogen decarboxylase family.</text>
</comment>
<name>DCUP_TROW8</name>
<feature type="chain" id="PRO_0000187654" description="Uroporphyrinogen decarboxylase">
    <location>
        <begin position="1"/>
        <end position="385"/>
    </location>
</feature>
<feature type="binding site" evidence="1">
    <location>
        <begin position="53"/>
        <end position="57"/>
    </location>
    <ligand>
        <name>substrate</name>
    </ligand>
</feature>
<feature type="binding site" evidence="1">
    <location>
        <position position="102"/>
    </location>
    <ligand>
        <name>substrate</name>
    </ligand>
</feature>
<feature type="binding site" evidence="1">
    <location>
        <position position="179"/>
    </location>
    <ligand>
        <name>substrate</name>
    </ligand>
</feature>
<feature type="binding site" evidence="1">
    <location>
        <position position="234"/>
    </location>
    <ligand>
        <name>substrate</name>
    </ligand>
</feature>
<feature type="binding site" evidence="1">
    <location>
        <position position="363"/>
    </location>
    <ligand>
        <name>substrate</name>
    </ligand>
</feature>
<feature type="site" description="Transition state stabilizer" evidence="1">
    <location>
        <position position="102"/>
    </location>
</feature>
<keyword id="KW-0963">Cytoplasm</keyword>
<keyword id="KW-0210">Decarboxylase</keyword>
<keyword id="KW-0456">Lyase</keyword>
<keyword id="KW-0627">Porphyrin biosynthesis</keyword>
<accession>Q83H92</accession>